<feature type="chain" id="PRO_1000148578" description="Photosystem II reaction center protein T">
    <location>
        <begin position="1"/>
        <end position="31"/>
    </location>
</feature>
<feature type="transmembrane region" description="Helical" evidence="1">
    <location>
        <begin position="3"/>
        <end position="23"/>
    </location>
</feature>
<comment type="function">
    <text evidence="1">Found at the monomer-monomer interface of the photosystem II (PS II) dimer, plays a role in assembly and dimerization of PSII. PSII is a light-driven water plastoquinone oxidoreductase, using light energy to abstract electrons from H(2)O, generating a proton gradient subsequently used for ATP formation.</text>
</comment>
<comment type="subunit">
    <text evidence="1">PSII is composed of 1 copy each of membrane proteins PsbA, PsbB, PsbC, PsbD, PsbE, PsbF, PsbH, PsbI, PsbJ, PsbK, PsbL, PsbM, PsbT, PsbX, PsbY, PsbZ, Psb30/Ycf12, peripheral proteins PsbO, CyanoQ (PsbQ), PsbU, PsbV and a large number of cofactors. It forms dimeric complexes.</text>
</comment>
<comment type="subcellular location">
    <subcellularLocation>
        <location evidence="1">Cellular thylakoid membrane</location>
        <topology evidence="1">Single-pass membrane protein</topology>
    </subcellularLocation>
</comment>
<comment type="similarity">
    <text evidence="1">Belongs to the PsbT family.</text>
</comment>
<dbReference type="EMBL" id="CP000806">
    <property type="protein sequence ID" value="ACB49743.1"/>
    <property type="molecule type" value="Genomic_DNA"/>
</dbReference>
<dbReference type="RefSeq" id="WP_008277098.1">
    <property type="nucleotide sequence ID" value="NC_010546.1"/>
</dbReference>
<dbReference type="SMR" id="B1WNA1"/>
<dbReference type="STRING" id="43989.cce_0392"/>
<dbReference type="KEGG" id="cyt:cce_0392"/>
<dbReference type="eggNOG" id="ENOG5033APQ">
    <property type="taxonomic scope" value="Bacteria"/>
</dbReference>
<dbReference type="HOGENOM" id="CLU_217078_1_0_3"/>
<dbReference type="OrthoDB" id="427659at2"/>
<dbReference type="Proteomes" id="UP000001203">
    <property type="component" value="Chromosome circular"/>
</dbReference>
<dbReference type="GO" id="GO:0009539">
    <property type="term" value="C:photosystem II reaction center"/>
    <property type="evidence" value="ECO:0007669"/>
    <property type="project" value="InterPro"/>
</dbReference>
<dbReference type="GO" id="GO:0031676">
    <property type="term" value="C:plasma membrane-derived thylakoid membrane"/>
    <property type="evidence" value="ECO:0007669"/>
    <property type="project" value="UniProtKB-SubCell"/>
</dbReference>
<dbReference type="GO" id="GO:0015979">
    <property type="term" value="P:photosynthesis"/>
    <property type="evidence" value="ECO:0007669"/>
    <property type="project" value="UniProtKB-UniRule"/>
</dbReference>
<dbReference type="HAMAP" id="MF_00808">
    <property type="entry name" value="PSII_PsbT"/>
    <property type="match status" value="1"/>
</dbReference>
<dbReference type="InterPro" id="IPR001743">
    <property type="entry name" value="PSII_PsbT"/>
</dbReference>
<dbReference type="InterPro" id="IPR037268">
    <property type="entry name" value="PSII_PsbT_sf"/>
</dbReference>
<dbReference type="NCBIfam" id="NF008825">
    <property type="entry name" value="PRK11875.1"/>
    <property type="match status" value="1"/>
</dbReference>
<dbReference type="PANTHER" id="PTHR36411">
    <property type="match status" value="1"/>
</dbReference>
<dbReference type="PANTHER" id="PTHR36411:SF2">
    <property type="entry name" value="PHOTOSYSTEM II REACTION CENTER PROTEIN T"/>
    <property type="match status" value="1"/>
</dbReference>
<dbReference type="Pfam" id="PF01405">
    <property type="entry name" value="PsbT"/>
    <property type="match status" value="1"/>
</dbReference>
<dbReference type="SUPFAM" id="SSF161029">
    <property type="entry name" value="Photosystem II reaction center protein T, PsbT"/>
    <property type="match status" value="1"/>
</dbReference>
<protein>
    <recommendedName>
        <fullName evidence="1">Photosystem II reaction center protein T</fullName>
        <shortName evidence="1">PSII-T</shortName>
    </recommendedName>
</protein>
<gene>
    <name evidence="1" type="primary">psbT</name>
    <name type="ordered locus">cce_0392</name>
</gene>
<name>PSBT_CROS5</name>
<reference key="1">
    <citation type="journal article" date="2008" name="Proc. Natl. Acad. Sci. U.S.A.">
        <title>The genome of Cyanothece 51142, a unicellular diazotrophic cyanobacterium important in the marine nitrogen cycle.</title>
        <authorList>
            <person name="Welsh E.A."/>
            <person name="Liberton M."/>
            <person name="Stoeckel J."/>
            <person name="Loh T."/>
            <person name="Elvitigala T."/>
            <person name="Wang C."/>
            <person name="Wollam A."/>
            <person name="Fulton R.S."/>
            <person name="Clifton S.W."/>
            <person name="Jacobs J.M."/>
            <person name="Aurora R."/>
            <person name="Ghosh B.K."/>
            <person name="Sherman L.A."/>
            <person name="Smith R.D."/>
            <person name="Wilson R.K."/>
            <person name="Pakrasi H.B."/>
        </authorList>
    </citation>
    <scope>NUCLEOTIDE SEQUENCE [LARGE SCALE GENOMIC DNA]</scope>
    <source>
        <strain>ATCC 51142 / BH68</strain>
    </source>
</reference>
<proteinExistence type="inferred from homology"/>
<sequence>MESVAYIVVLTMALAVLFFAIAFREPPRIQK</sequence>
<organism>
    <name type="scientific">Crocosphaera subtropica (strain ATCC 51142 / BH68)</name>
    <name type="common">Cyanothece sp. (strain ATCC 51142)</name>
    <dbReference type="NCBI Taxonomy" id="43989"/>
    <lineage>
        <taxon>Bacteria</taxon>
        <taxon>Bacillati</taxon>
        <taxon>Cyanobacteriota</taxon>
        <taxon>Cyanophyceae</taxon>
        <taxon>Oscillatoriophycideae</taxon>
        <taxon>Chroococcales</taxon>
        <taxon>Aphanothecaceae</taxon>
        <taxon>Crocosphaera</taxon>
        <taxon>Crocosphaera subtropica</taxon>
    </lineage>
</organism>
<keyword id="KW-0472">Membrane</keyword>
<keyword id="KW-0602">Photosynthesis</keyword>
<keyword id="KW-0604">Photosystem II</keyword>
<keyword id="KW-1185">Reference proteome</keyword>
<keyword id="KW-0793">Thylakoid</keyword>
<keyword id="KW-0812">Transmembrane</keyword>
<keyword id="KW-1133">Transmembrane helix</keyword>
<evidence type="ECO:0000255" key="1">
    <source>
        <dbReference type="HAMAP-Rule" id="MF_00808"/>
    </source>
</evidence>
<accession>B1WNA1</accession>